<protein>
    <recommendedName>
        <fullName evidence="1">Exodeoxyribonuclease 7 small subunit</fullName>
        <ecNumber evidence="1">3.1.11.6</ecNumber>
    </recommendedName>
    <alternativeName>
        <fullName evidence="1">Exodeoxyribonuclease VII small subunit</fullName>
        <shortName evidence="1">Exonuclease VII small subunit</shortName>
    </alternativeName>
</protein>
<accession>Q487D1</accession>
<gene>
    <name evidence="1" type="primary">xseB</name>
    <name type="ordered locus">CPS_1090</name>
</gene>
<evidence type="ECO:0000255" key="1">
    <source>
        <dbReference type="HAMAP-Rule" id="MF_00337"/>
    </source>
</evidence>
<comment type="function">
    <text evidence="1">Bidirectionally degrades single-stranded DNA into large acid-insoluble oligonucleotides, which are then degraded further into small acid-soluble oligonucleotides.</text>
</comment>
<comment type="catalytic activity">
    <reaction evidence="1">
        <text>Exonucleolytic cleavage in either 5'- to 3'- or 3'- to 5'-direction to yield nucleoside 5'-phosphates.</text>
        <dbReference type="EC" id="3.1.11.6"/>
    </reaction>
</comment>
<comment type="subunit">
    <text evidence="1">Heterooligomer composed of large and small subunits.</text>
</comment>
<comment type="subcellular location">
    <subcellularLocation>
        <location evidence="1">Cytoplasm</location>
    </subcellularLocation>
</comment>
<comment type="similarity">
    <text evidence="1">Belongs to the XseB family.</text>
</comment>
<organism>
    <name type="scientific">Colwellia psychrerythraea (strain 34H / ATCC BAA-681)</name>
    <name type="common">Vibrio psychroerythus</name>
    <dbReference type="NCBI Taxonomy" id="167879"/>
    <lineage>
        <taxon>Bacteria</taxon>
        <taxon>Pseudomonadati</taxon>
        <taxon>Pseudomonadota</taxon>
        <taxon>Gammaproteobacteria</taxon>
        <taxon>Alteromonadales</taxon>
        <taxon>Colwelliaceae</taxon>
        <taxon>Colwellia</taxon>
    </lineage>
</organism>
<proteinExistence type="inferred from homology"/>
<name>EX7S_COLP3</name>
<feature type="chain" id="PRO_0000303704" description="Exodeoxyribonuclease 7 small subunit">
    <location>
        <begin position="1"/>
        <end position="82"/>
    </location>
</feature>
<keyword id="KW-0963">Cytoplasm</keyword>
<keyword id="KW-0269">Exonuclease</keyword>
<keyword id="KW-0378">Hydrolase</keyword>
<keyword id="KW-0540">Nuclease</keyword>
<dbReference type="EC" id="3.1.11.6" evidence="1"/>
<dbReference type="EMBL" id="CP000083">
    <property type="protein sequence ID" value="AAZ24300.1"/>
    <property type="molecule type" value="Genomic_DNA"/>
</dbReference>
<dbReference type="RefSeq" id="WP_011041928.1">
    <property type="nucleotide sequence ID" value="NC_003910.7"/>
</dbReference>
<dbReference type="SMR" id="Q487D1"/>
<dbReference type="STRING" id="167879.CPS_1090"/>
<dbReference type="KEGG" id="cps:CPS_1090"/>
<dbReference type="eggNOG" id="COG1722">
    <property type="taxonomic scope" value="Bacteria"/>
</dbReference>
<dbReference type="HOGENOM" id="CLU_145918_3_1_6"/>
<dbReference type="Proteomes" id="UP000000547">
    <property type="component" value="Chromosome"/>
</dbReference>
<dbReference type="GO" id="GO:0005829">
    <property type="term" value="C:cytosol"/>
    <property type="evidence" value="ECO:0007669"/>
    <property type="project" value="TreeGrafter"/>
</dbReference>
<dbReference type="GO" id="GO:0009318">
    <property type="term" value="C:exodeoxyribonuclease VII complex"/>
    <property type="evidence" value="ECO:0007669"/>
    <property type="project" value="InterPro"/>
</dbReference>
<dbReference type="GO" id="GO:0008855">
    <property type="term" value="F:exodeoxyribonuclease VII activity"/>
    <property type="evidence" value="ECO:0007669"/>
    <property type="project" value="UniProtKB-UniRule"/>
</dbReference>
<dbReference type="GO" id="GO:0006308">
    <property type="term" value="P:DNA catabolic process"/>
    <property type="evidence" value="ECO:0007669"/>
    <property type="project" value="UniProtKB-UniRule"/>
</dbReference>
<dbReference type="Gene3D" id="1.10.287.1040">
    <property type="entry name" value="Exonuclease VII, small subunit"/>
    <property type="match status" value="1"/>
</dbReference>
<dbReference type="HAMAP" id="MF_00337">
    <property type="entry name" value="Exonuc_7_S"/>
    <property type="match status" value="1"/>
</dbReference>
<dbReference type="InterPro" id="IPR003761">
    <property type="entry name" value="Exonuc_VII_S"/>
</dbReference>
<dbReference type="InterPro" id="IPR037004">
    <property type="entry name" value="Exonuc_VII_ssu_sf"/>
</dbReference>
<dbReference type="NCBIfam" id="NF002140">
    <property type="entry name" value="PRK00977.1-4"/>
    <property type="match status" value="1"/>
</dbReference>
<dbReference type="NCBIfam" id="TIGR01280">
    <property type="entry name" value="xseB"/>
    <property type="match status" value="1"/>
</dbReference>
<dbReference type="PANTHER" id="PTHR34137">
    <property type="entry name" value="EXODEOXYRIBONUCLEASE 7 SMALL SUBUNIT"/>
    <property type="match status" value="1"/>
</dbReference>
<dbReference type="PANTHER" id="PTHR34137:SF1">
    <property type="entry name" value="EXODEOXYRIBONUCLEASE 7 SMALL SUBUNIT"/>
    <property type="match status" value="1"/>
</dbReference>
<dbReference type="Pfam" id="PF02609">
    <property type="entry name" value="Exonuc_VII_S"/>
    <property type="match status" value="1"/>
</dbReference>
<dbReference type="SUPFAM" id="SSF116842">
    <property type="entry name" value="XseB-like"/>
    <property type="match status" value="1"/>
</dbReference>
<sequence length="82" mass="9089">MAKKKLENLSFEESLNELDTIVQSLEQGELSLEESMTLFERGLNLSQLSQVKLQAAEQKVQILLDKNGTAKLTDFDSSAGES</sequence>
<reference key="1">
    <citation type="journal article" date="2005" name="Proc. Natl. Acad. Sci. U.S.A.">
        <title>The psychrophilic lifestyle as revealed by the genome sequence of Colwellia psychrerythraea 34H through genomic and proteomic analyses.</title>
        <authorList>
            <person name="Methe B.A."/>
            <person name="Nelson K.E."/>
            <person name="Deming J.W."/>
            <person name="Momen B."/>
            <person name="Melamud E."/>
            <person name="Zhang X."/>
            <person name="Moult J."/>
            <person name="Madupu R."/>
            <person name="Nelson W.C."/>
            <person name="Dodson R.J."/>
            <person name="Brinkac L.M."/>
            <person name="Daugherty S.C."/>
            <person name="Durkin A.S."/>
            <person name="DeBoy R.T."/>
            <person name="Kolonay J.F."/>
            <person name="Sullivan S.A."/>
            <person name="Zhou L."/>
            <person name="Davidsen T.M."/>
            <person name="Wu M."/>
            <person name="Huston A.L."/>
            <person name="Lewis M."/>
            <person name="Weaver B."/>
            <person name="Weidman J.F."/>
            <person name="Khouri H."/>
            <person name="Utterback T.R."/>
            <person name="Feldblyum T.V."/>
            <person name="Fraser C.M."/>
        </authorList>
    </citation>
    <scope>NUCLEOTIDE SEQUENCE [LARGE SCALE GENOMIC DNA]</scope>
    <source>
        <strain>34H / ATCC BAA-681</strain>
    </source>
</reference>